<accession>Q5RBV9</accession>
<accession>A0A2J8TRU7</accession>
<accession>A0A6D2XZD5</accession>
<accession>H2NKS3</accession>
<proteinExistence type="evidence at transcript level"/>
<feature type="chain" id="PRO_0000349182" description="E3 ubiquitin-protein ligase RNF212B">
    <location>
        <begin position="1"/>
        <end position="300"/>
    </location>
</feature>
<feature type="zinc finger region" description="RING-type">
    <location>
        <begin position="6"/>
        <end position="40"/>
    </location>
</feature>
<feature type="region of interest" description="Disordered" evidence="3">
    <location>
        <begin position="141"/>
        <end position="251"/>
    </location>
</feature>
<feature type="region of interest" description="Disordered" evidence="3">
    <location>
        <begin position="280"/>
        <end position="300"/>
    </location>
</feature>
<feature type="coiled-coil region" evidence="2">
    <location>
        <begin position="88"/>
        <end position="124"/>
    </location>
</feature>
<feature type="compositionally biased region" description="Polar residues" evidence="3">
    <location>
        <begin position="155"/>
        <end position="169"/>
    </location>
</feature>
<feature type="compositionally biased region" description="Low complexity" evidence="3">
    <location>
        <begin position="170"/>
        <end position="183"/>
    </location>
</feature>
<feature type="compositionally biased region" description="Gly residues" evidence="3">
    <location>
        <begin position="191"/>
        <end position="200"/>
    </location>
</feature>
<feature type="compositionally biased region" description="Polar residues" evidence="3">
    <location>
        <begin position="211"/>
        <end position="234"/>
    </location>
</feature>
<feature type="sequence conflict" description="In Ref. 1; CAH90751." evidence="4" ref="1">
    <original>Q</original>
    <variation>K</variation>
    <location>
        <position position="172"/>
    </location>
</feature>
<feature type="sequence conflict" description="In Ref. 1; CAH90751." evidence="4" ref="1">
    <original>VPYRE</original>
    <variation>IPYRD</variation>
    <location>
        <begin position="183"/>
        <end position="187"/>
    </location>
</feature>
<feature type="sequence conflict" description="In Ref. 1; CAH90751." evidence="4" ref="1">
    <original>L</original>
    <variation>F</variation>
    <location>
        <position position="257"/>
    </location>
</feature>
<organism>
    <name type="scientific">Pongo abelii</name>
    <name type="common">Sumatran orangutan</name>
    <name type="synonym">Pongo pygmaeus abelii</name>
    <dbReference type="NCBI Taxonomy" id="9601"/>
    <lineage>
        <taxon>Eukaryota</taxon>
        <taxon>Metazoa</taxon>
        <taxon>Chordata</taxon>
        <taxon>Craniata</taxon>
        <taxon>Vertebrata</taxon>
        <taxon>Euteleostomi</taxon>
        <taxon>Mammalia</taxon>
        <taxon>Eutheria</taxon>
        <taxon>Euarchontoglires</taxon>
        <taxon>Primates</taxon>
        <taxon>Haplorrhini</taxon>
        <taxon>Catarrhini</taxon>
        <taxon>Hominidae</taxon>
        <taxon>Pongo</taxon>
    </lineage>
</organism>
<reference key="1">
    <citation type="submission" date="2004-11" db="EMBL/GenBank/DDBJ databases">
        <authorList>
            <consortium name="The German cDNA consortium"/>
        </authorList>
    </citation>
    <scope>NUCLEOTIDE SEQUENCE [LARGE SCALE MRNA]</scope>
    <source>
        <tissue>Kidney</tissue>
    </source>
</reference>
<reference key="2">
    <citation type="submission" date="2008-02" db="EMBL/GenBank/DDBJ databases">
        <title>A 6x draft sequence assembly of the Pongo pygmaeus abelii genome.</title>
        <authorList>
            <person name="Wilson R.K."/>
            <person name="Mardis E."/>
        </authorList>
    </citation>
    <scope>NUCLEOTIDE SEQUENCE [LARGE SCALE GENOMIC DNA]</scope>
</reference>
<reference key="3">
    <citation type="submission" date="2017-12" db="EMBL/GenBank/DDBJ databases">
        <title>High-resolution comparative analysis of great ape genomes.</title>
        <authorList>
            <person name="Pollen A."/>
            <person name="Hastie A."/>
            <person name="Hormozdiari F."/>
            <person name="Dougherty M."/>
            <person name="Liu R."/>
            <person name="Chaisson M."/>
            <person name="Hoppe E."/>
            <person name="Hill C."/>
            <person name="Pang A."/>
            <person name="Hillier L."/>
            <person name="Baker C."/>
            <person name="Armstrong J."/>
            <person name="Shendure J."/>
            <person name="Paten B."/>
            <person name="Wilson R."/>
            <person name="Chao H."/>
            <person name="Schneider V."/>
            <person name="Ventura M."/>
            <person name="Kronenberg Z."/>
            <person name="Murali S."/>
            <person name="Gordon D."/>
            <person name="Cantsilieris S."/>
            <person name="Munson K."/>
            <person name="Nelson B."/>
            <person name="Raja A."/>
            <person name="Underwood J."/>
            <person name="Diekhans M."/>
            <person name="Fiddes I."/>
            <person name="Haussler D."/>
            <person name="Eichler E."/>
        </authorList>
    </citation>
    <scope>NUCLEOTIDE SEQUENCE [LARGE SCALE GENOMIC DNA]</scope>
</reference>
<sequence>MDWFHCNQCFRKDGAHFFVTSCGHIFCKKCVTLEKCAVCGTACKHLALSDNLKPQEKMFFKSPVETALQYFSHISQVWSFQKKQTDLLIAFYKHRITKLETAMQETQQALVSQDKELSVLRKENGELKKFLAILKESPSRYQGSRSITPRPVAITSPSQSVTPRPSFQHSSQVVSRSSSVESVPYREAGFGSLGQGGRGLQGRRTPRDSYNETPSPASTHSLSYRPSSASSGQGIFSFRPSPNGHSGHTRVLTPNNLAQRESRTTLESLPSFQLPVLQTPYQQQRQMGLPSGREAWTTSR</sequence>
<keyword id="KW-0158">Chromosome</keyword>
<keyword id="KW-0175">Coiled coil</keyword>
<keyword id="KW-0469">Meiosis</keyword>
<keyword id="KW-0479">Metal-binding</keyword>
<keyword id="KW-1185">Reference proteome</keyword>
<keyword id="KW-0808">Transferase</keyword>
<keyword id="KW-0832">Ubl conjugation</keyword>
<keyword id="KW-0862">Zinc</keyword>
<keyword id="KW-0863">Zinc-finger</keyword>
<comment type="function">
    <text evidence="1">Ubiquitin E3 ligase that acts as a crucial factor for crossing-over (CO) formation during meiosis. Essential for normal prophase I progression and for ensuring appropriate CO designation in meiosis. Recruits key components of the cross-over machinery either directly ou indirectly, leading to the activation of the MutL-gamma complex. The function of RNF212B in CO designation is dependent on its catalytic activity.</text>
</comment>
<comment type="catalytic activity">
    <reaction evidence="1">
        <text>S-ubiquitinyl-[E2 ubiquitin-conjugating enzyme]-L-cysteine + [acceptor protein]-L-lysine = [E2 ubiquitin-conjugating enzyme]-L-cysteine + N(6)-ubiquitinyl-[acceptor protein]-L-lysine.</text>
        <dbReference type="EC" id="2.3.2.27"/>
    </reaction>
</comment>
<comment type="pathway">
    <text evidence="1">Protein modification; protein ubiquitination.</text>
</comment>
<comment type="subunit">
    <text evidence="1">Homodimer.</text>
</comment>
<comment type="subcellular location">
    <subcellularLocation>
        <location evidence="1">Chromosome</location>
    </subcellularLocation>
    <text evidence="1">Colocalizes with RNF212.</text>
</comment>
<comment type="PTM">
    <text evidence="1">Autoubiquitinated.</text>
</comment>
<dbReference type="EC" id="2.3.2.27" evidence="1"/>
<dbReference type="EMBL" id="CR858524">
    <property type="protein sequence ID" value="CAH90751.1"/>
    <property type="molecule type" value="mRNA"/>
</dbReference>
<dbReference type="EMBL" id="NDHI03003485">
    <property type="protein sequence ID" value="PNJ35736.1"/>
    <property type="molecule type" value="Genomic_DNA"/>
</dbReference>
<dbReference type="EMBL" id="NDHI03003485">
    <property type="protein sequence ID" value="PNJ35737.1"/>
    <property type="molecule type" value="Genomic_DNA"/>
</dbReference>
<dbReference type="RefSeq" id="NP_001125420.1">
    <property type="nucleotide sequence ID" value="NM_001131948.1"/>
</dbReference>
<dbReference type="RefSeq" id="XP_009247201.1">
    <property type="nucleotide sequence ID" value="XM_009248926.1"/>
</dbReference>
<dbReference type="RefSeq" id="XP_024086946.1">
    <property type="nucleotide sequence ID" value="XM_024231178.3"/>
</dbReference>
<dbReference type="FunCoup" id="Q5RBV9">
    <property type="interactions" value="11"/>
</dbReference>
<dbReference type="STRING" id="9601.ENSPPYP00000006437"/>
<dbReference type="Ensembl" id="ENSPPYT00000051452.1">
    <property type="protein sequence ID" value="ENSPPYP00000045047.1"/>
    <property type="gene ID" value="ENSPPYG00000037980.1"/>
</dbReference>
<dbReference type="GeneID" id="100172327"/>
<dbReference type="KEGG" id="pon:100172327"/>
<dbReference type="CTD" id="100507650"/>
<dbReference type="eggNOG" id="KOG4739">
    <property type="taxonomic scope" value="Eukaryota"/>
</dbReference>
<dbReference type="GeneTree" id="ENSGT00740000115581"/>
<dbReference type="InParanoid" id="Q5RBV9"/>
<dbReference type="OMA" id="QVWRFQK"/>
<dbReference type="OrthoDB" id="2535391at2759"/>
<dbReference type="UniPathway" id="UPA00143"/>
<dbReference type="Proteomes" id="UP000001595">
    <property type="component" value="Chromosome 14"/>
</dbReference>
<dbReference type="GO" id="GO:0000795">
    <property type="term" value="C:synaptonemal complex"/>
    <property type="evidence" value="ECO:0000250"/>
    <property type="project" value="UniProtKB"/>
</dbReference>
<dbReference type="GO" id="GO:0019789">
    <property type="term" value="F:SUMO transferase activity"/>
    <property type="evidence" value="ECO:0007669"/>
    <property type="project" value="InterPro"/>
</dbReference>
<dbReference type="GO" id="GO:0061630">
    <property type="term" value="F:ubiquitin protein ligase activity"/>
    <property type="evidence" value="ECO:0000250"/>
    <property type="project" value="UniProtKB"/>
</dbReference>
<dbReference type="GO" id="GO:0008270">
    <property type="term" value="F:zinc ion binding"/>
    <property type="evidence" value="ECO:0007669"/>
    <property type="project" value="UniProtKB-KW"/>
</dbReference>
<dbReference type="GO" id="GO:0051026">
    <property type="term" value="P:chiasma assembly"/>
    <property type="evidence" value="ECO:0000250"/>
    <property type="project" value="UniProtKB"/>
</dbReference>
<dbReference type="GO" id="GO:0007129">
    <property type="term" value="P:homologous chromosome pairing at meiosis"/>
    <property type="evidence" value="ECO:0000250"/>
    <property type="project" value="UniProtKB"/>
</dbReference>
<dbReference type="GO" id="GO:0016925">
    <property type="term" value="P:protein sumoylation"/>
    <property type="evidence" value="ECO:0007669"/>
    <property type="project" value="TreeGrafter"/>
</dbReference>
<dbReference type="GO" id="GO:0016567">
    <property type="term" value="P:protein ubiquitination"/>
    <property type="evidence" value="ECO:0000250"/>
    <property type="project" value="UniProtKB"/>
</dbReference>
<dbReference type="CDD" id="cd16747">
    <property type="entry name" value="RING-HC_RNF212B"/>
    <property type="match status" value="1"/>
</dbReference>
<dbReference type="InterPro" id="IPR042123">
    <property type="entry name" value="Zip3/RNF212-like"/>
</dbReference>
<dbReference type="InterPro" id="IPR017907">
    <property type="entry name" value="Znf_RING_CS"/>
</dbReference>
<dbReference type="PANTHER" id="PTHR22663:SF29">
    <property type="entry name" value="RING FINGER PROTEIN 212B"/>
    <property type="match status" value="1"/>
</dbReference>
<dbReference type="PANTHER" id="PTHR22663">
    <property type="entry name" value="RING FINGER PROTEIN NARYA-RELATED"/>
    <property type="match status" value="1"/>
</dbReference>
<dbReference type="PROSITE" id="PS00518">
    <property type="entry name" value="ZF_RING_1"/>
    <property type="match status" value="1"/>
</dbReference>
<gene>
    <name type="primary">RNF212B</name>
</gene>
<name>R212B_PONAB</name>
<protein>
    <recommendedName>
        <fullName>E3 ubiquitin-protein ligase RNF212B</fullName>
        <ecNumber evidence="1">2.3.2.27</ecNumber>
    </recommendedName>
    <alternativeName>
        <fullName>RING finger protein 212B</fullName>
    </alternativeName>
</protein>
<evidence type="ECO:0000250" key="1">
    <source>
        <dbReference type="UniProtKB" id="D3Z423"/>
    </source>
</evidence>
<evidence type="ECO:0000255" key="2"/>
<evidence type="ECO:0000256" key="3">
    <source>
        <dbReference type="SAM" id="MobiDB-lite"/>
    </source>
</evidence>
<evidence type="ECO:0000305" key="4"/>